<accession>P53998</accession>
<accession>Q6CQ46</accession>
<proteinExistence type="inferred from homology"/>
<dbReference type="EMBL" id="X70373">
    <property type="protein sequence ID" value="CAA49833.1"/>
    <property type="molecule type" value="Genomic_DNA"/>
</dbReference>
<dbReference type="EMBL" id="CR382124">
    <property type="protein sequence ID" value="CAH01039.1"/>
    <property type="molecule type" value="Genomic_DNA"/>
</dbReference>
<dbReference type="PIR" id="S31336">
    <property type="entry name" value="S31336"/>
</dbReference>
<dbReference type="RefSeq" id="XP_453943.1">
    <property type="nucleotide sequence ID" value="XM_453943.1"/>
</dbReference>
<dbReference type="SMR" id="P53998"/>
<dbReference type="FunCoup" id="P53998">
    <property type="interactions" value="393"/>
</dbReference>
<dbReference type="STRING" id="284590.P53998"/>
<dbReference type="PaxDb" id="284590-P53998"/>
<dbReference type="KEGG" id="kla:KLLA0_D19833g"/>
<dbReference type="eggNOG" id="KOG2439">
    <property type="taxonomic scope" value="Eukaryota"/>
</dbReference>
<dbReference type="HOGENOM" id="CLU_018240_0_1_1"/>
<dbReference type="InParanoid" id="P53998"/>
<dbReference type="OMA" id="VMPCTCK"/>
<dbReference type="Proteomes" id="UP000000598">
    <property type="component" value="Chromosome D"/>
</dbReference>
<dbReference type="GO" id="GO:0051539">
    <property type="term" value="F:4 iron, 4 sulfur cluster binding"/>
    <property type="evidence" value="ECO:0007669"/>
    <property type="project" value="UniProtKB-KW"/>
</dbReference>
<dbReference type="GO" id="GO:0051536">
    <property type="term" value="F:iron-sulfur cluster binding"/>
    <property type="evidence" value="ECO:0000250"/>
    <property type="project" value="UniProtKB"/>
</dbReference>
<dbReference type="GO" id="GO:0046872">
    <property type="term" value="F:metal ion binding"/>
    <property type="evidence" value="ECO:0007669"/>
    <property type="project" value="UniProtKB-KW"/>
</dbReference>
<dbReference type="GO" id="GO:0016226">
    <property type="term" value="P:iron-sulfur cluster assembly"/>
    <property type="evidence" value="ECO:0000250"/>
    <property type="project" value="UniProtKB"/>
</dbReference>
<dbReference type="Gene3D" id="3.40.50.1780">
    <property type="match status" value="1"/>
</dbReference>
<dbReference type="Gene3D" id="3.40.950.10">
    <property type="entry name" value="Fe-only Hydrogenase (Larger Subunit), Chain L, domain 3"/>
    <property type="match status" value="1"/>
</dbReference>
<dbReference type="InterPro" id="IPR050340">
    <property type="entry name" value="Cytosolic_Fe-S_CAF"/>
</dbReference>
<dbReference type="InterPro" id="IPR009016">
    <property type="entry name" value="Fe_hydrogenase"/>
</dbReference>
<dbReference type="InterPro" id="IPR004108">
    <property type="entry name" value="Fe_hydrogenase_lsu_C"/>
</dbReference>
<dbReference type="PANTHER" id="PTHR11615">
    <property type="entry name" value="NITRATE, FORMATE, IRON DEHYDROGENASE"/>
    <property type="match status" value="1"/>
</dbReference>
<dbReference type="Pfam" id="PF02906">
    <property type="entry name" value="Fe_hyd_lg_C"/>
    <property type="match status" value="1"/>
</dbReference>
<dbReference type="SUPFAM" id="SSF53920">
    <property type="entry name" value="Fe-only hydrogenase"/>
    <property type="match status" value="1"/>
</dbReference>
<feature type="chain" id="PRO_0000084407" description="Cytosolic Fe-S cluster assembly factor NAR1">
    <location>
        <begin position="1"/>
        <end position="469"/>
    </location>
</feature>
<feature type="binding site" evidence="2">
    <location>
        <position position="20"/>
    </location>
    <ligand>
        <name>[4Fe-4S] cluster</name>
        <dbReference type="ChEBI" id="CHEBI:49883"/>
        <label>1</label>
    </ligand>
</feature>
<feature type="binding site" evidence="2">
    <location>
        <position position="56"/>
    </location>
    <ligand>
        <name>[4Fe-4S] cluster</name>
        <dbReference type="ChEBI" id="CHEBI:49883"/>
        <label>1</label>
    </ligand>
</feature>
<feature type="binding site" evidence="2">
    <location>
        <position position="59"/>
    </location>
    <ligand>
        <name>[4Fe-4S] cluster</name>
        <dbReference type="ChEBI" id="CHEBI:49883"/>
        <label>1</label>
    </ligand>
</feature>
<feature type="binding site" evidence="2">
    <location>
        <position position="62"/>
    </location>
    <ligand>
        <name>[4Fe-4S] cluster</name>
        <dbReference type="ChEBI" id="CHEBI:49883"/>
        <label>1</label>
    </ligand>
</feature>
<feature type="binding site" evidence="2">
    <location>
        <position position="168"/>
    </location>
    <ligand>
        <name>[4Fe-4S] cluster</name>
        <dbReference type="ChEBI" id="CHEBI:49883"/>
        <label>2</label>
    </ligand>
</feature>
<feature type="binding site" evidence="2">
    <location>
        <position position="215"/>
    </location>
    <ligand>
        <name>[4Fe-4S] cluster</name>
        <dbReference type="ChEBI" id="CHEBI:49883"/>
        <label>2</label>
    </ligand>
</feature>
<feature type="binding site" evidence="2">
    <location>
        <position position="394"/>
    </location>
    <ligand>
        <name>[4Fe-4S] cluster</name>
        <dbReference type="ChEBI" id="CHEBI:49883"/>
        <label>2</label>
    </ligand>
</feature>
<feature type="binding site" evidence="2">
    <location>
        <position position="398"/>
    </location>
    <ligand>
        <name>[4Fe-4S] cluster</name>
        <dbReference type="ChEBI" id="CHEBI:49883"/>
        <label>2</label>
    </ligand>
</feature>
<feature type="sequence conflict" description="In Ref. 1; CAA49833." evidence="3" ref="1">
    <original>E</original>
    <variation>Q</variation>
    <location>
        <position position="239"/>
    </location>
</feature>
<comment type="function">
    <text evidence="1">Component of the cytosolic Fe/S protein assembly machinery. Required for maturation of extramitochondrial Fe/S proteins. May play a role in the transfer of pre-assembled Fe/S clusters to target apoproteins (By similarity).</text>
</comment>
<comment type="similarity">
    <text evidence="3">Belongs to the NARF family.</text>
</comment>
<organism>
    <name type="scientific">Kluyveromyces lactis (strain ATCC 8585 / CBS 2359 / DSM 70799 / NBRC 1267 / NRRL Y-1140 / WM37)</name>
    <name type="common">Yeast</name>
    <name type="synonym">Candida sphaerica</name>
    <dbReference type="NCBI Taxonomy" id="284590"/>
    <lineage>
        <taxon>Eukaryota</taxon>
        <taxon>Fungi</taxon>
        <taxon>Dikarya</taxon>
        <taxon>Ascomycota</taxon>
        <taxon>Saccharomycotina</taxon>
        <taxon>Saccharomycetes</taxon>
        <taxon>Saccharomycetales</taxon>
        <taxon>Saccharomycetaceae</taxon>
        <taxon>Kluyveromyces</taxon>
    </lineage>
</organism>
<sequence length="469" mass="52073">MSALLRDADLNDFISPGLACVKPAQPQKVEKKPSFEVEVGIESSEPEKVSISLQDCLACAGCITSSEEILLSKQSHKVFLEKWSELEELDERSLAVSISPQCRLSLADYYSMCLADLDRCFQNFMKTKFNAKYVVGTQFGRSISISRINATLKDRVPENEGPLLCSVCPGFVLYAEKTKPELIPHMLDVKSPQQITGNLLKQADPTCYHLSIMPCFDKKLEASREECEKEVDCVITPKEFVAMLGDLSIDFKSYMTEYDSSKELCPSGWDYKLHWLSNEGSSSGGYAYQYLLSLQSSNPESDIITIEGKNSDVTEYRLVSKSKGVIASSSEVYGFRNIQNLVRKLSQSASVKKRGIKVKRRGQSVLKSGETSEKTTKVLTADPAKTDFVEVMACPSGCINGGGLLNEEKNANRRKQLAQDLSLAYTKVHSVNIPDIVHAYDDKSNDFKYNLRVIEPSTSSDVVAVGNTW</sequence>
<gene>
    <name type="primary">NAR1</name>
    <name type="synonym">LET1</name>
    <name type="ordered locus">KLLA0D19833g</name>
</gene>
<reference key="1">
    <citation type="submission" date="1993-02" db="EMBL/GenBank/DDBJ databases">
        <authorList>
            <person name="Wesolowski-Louvel M."/>
            <person name="Tanguy-Rougeau C."/>
            <person name="Fukuhara H."/>
        </authorList>
    </citation>
    <scope>NUCLEOTIDE SEQUENCE [GENOMIC DNA]</scope>
    <source>
        <strain>ATCC 76492 / CBS 2359/152 / CLIB 210</strain>
    </source>
</reference>
<reference key="2">
    <citation type="journal article" date="2004" name="Nature">
        <title>Genome evolution in yeasts.</title>
        <authorList>
            <person name="Dujon B."/>
            <person name="Sherman D."/>
            <person name="Fischer G."/>
            <person name="Durrens P."/>
            <person name="Casaregola S."/>
            <person name="Lafontaine I."/>
            <person name="de Montigny J."/>
            <person name="Marck C."/>
            <person name="Neuveglise C."/>
            <person name="Talla E."/>
            <person name="Goffard N."/>
            <person name="Frangeul L."/>
            <person name="Aigle M."/>
            <person name="Anthouard V."/>
            <person name="Babour A."/>
            <person name="Barbe V."/>
            <person name="Barnay S."/>
            <person name="Blanchin S."/>
            <person name="Beckerich J.-M."/>
            <person name="Beyne E."/>
            <person name="Bleykasten C."/>
            <person name="Boisrame A."/>
            <person name="Boyer J."/>
            <person name="Cattolico L."/>
            <person name="Confanioleri F."/>
            <person name="de Daruvar A."/>
            <person name="Despons L."/>
            <person name="Fabre E."/>
            <person name="Fairhead C."/>
            <person name="Ferry-Dumazet H."/>
            <person name="Groppi A."/>
            <person name="Hantraye F."/>
            <person name="Hennequin C."/>
            <person name="Jauniaux N."/>
            <person name="Joyet P."/>
            <person name="Kachouri R."/>
            <person name="Kerrest A."/>
            <person name="Koszul R."/>
            <person name="Lemaire M."/>
            <person name="Lesur I."/>
            <person name="Ma L."/>
            <person name="Muller H."/>
            <person name="Nicaud J.-M."/>
            <person name="Nikolski M."/>
            <person name="Oztas S."/>
            <person name="Ozier-Kalogeropoulos O."/>
            <person name="Pellenz S."/>
            <person name="Potier S."/>
            <person name="Richard G.-F."/>
            <person name="Straub M.-L."/>
            <person name="Suleau A."/>
            <person name="Swennen D."/>
            <person name="Tekaia F."/>
            <person name="Wesolowski-Louvel M."/>
            <person name="Westhof E."/>
            <person name="Wirth B."/>
            <person name="Zeniou-Meyer M."/>
            <person name="Zivanovic Y."/>
            <person name="Bolotin-Fukuhara M."/>
            <person name="Thierry A."/>
            <person name="Bouchier C."/>
            <person name="Caudron B."/>
            <person name="Scarpelli C."/>
            <person name="Gaillardin C."/>
            <person name="Weissenbach J."/>
            <person name="Wincker P."/>
            <person name="Souciet J.-L."/>
        </authorList>
    </citation>
    <scope>NUCLEOTIDE SEQUENCE [LARGE SCALE GENOMIC DNA]</scope>
    <source>
        <strain>ATCC 8585 / CBS 2359 / DSM 70799 / NBRC 1267 / NRRL Y-1140 / WM37</strain>
    </source>
</reference>
<protein>
    <recommendedName>
        <fullName>Cytosolic Fe-S cluster assembly factor NAR1</fullName>
    </recommendedName>
    <alternativeName>
        <fullName>Nuclear architecture-related protein 1</fullName>
    </alternativeName>
</protein>
<evidence type="ECO:0000250" key="1"/>
<evidence type="ECO:0000255" key="2"/>
<evidence type="ECO:0000305" key="3"/>
<keyword id="KW-0004">4Fe-4S</keyword>
<keyword id="KW-0408">Iron</keyword>
<keyword id="KW-0411">Iron-sulfur</keyword>
<keyword id="KW-0479">Metal-binding</keyword>
<keyword id="KW-1185">Reference proteome</keyword>
<name>NAR1_KLULA</name>